<name>UCRIA_NOSS1</name>
<sequence>MAQFSESVDVPDMGRRQFMNLLTFGTVTGVALGALYPVVNYFIPPAAGGAGGGTTAKDELGNDVSVSKFLESHNVGDRTLVQGLKGDPTYIVVESKEAITDYGINAVCTHLGCVVPWNAAENKFKCPCHGSQYDATGKVVRGPAPKSLALSHAKTENDKIVLTSWTETDFRTGEEPWWS</sequence>
<keyword id="KW-0001">2Fe-2S</keyword>
<keyword id="KW-0002">3D-structure</keyword>
<keyword id="KW-1015">Disulfide bond</keyword>
<keyword id="KW-0249">Electron transport</keyword>
<keyword id="KW-0408">Iron</keyword>
<keyword id="KW-0411">Iron-sulfur</keyword>
<keyword id="KW-0472">Membrane</keyword>
<keyword id="KW-0479">Metal-binding</keyword>
<keyword id="KW-1185">Reference proteome</keyword>
<keyword id="KW-0793">Thylakoid</keyword>
<keyword id="KW-1278">Translocase</keyword>
<keyword id="KW-0812">Transmembrane</keyword>
<keyword id="KW-1133">Transmembrane helix</keyword>
<keyword id="KW-0813">Transport</keyword>
<dbReference type="EC" id="7.1.1.6" evidence="1"/>
<dbReference type="EMBL" id="AJ319646">
    <property type="protein sequence ID" value="CAC39604.1"/>
    <property type="molecule type" value="Genomic_DNA"/>
</dbReference>
<dbReference type="EMBL" id="BA000019">
    <property type="protein sequence ID" value="BAB74152.1"/>
    <property type="molecule type" value="Genomic_DNA"/>
</dbReference>
<dbReference type="PIR" id="AF2112">
    <property type="entry name" value="AF2112"/>
</dbReference>
<dbReference type="PDB" id="2ZT9">
    <property type="method" value="X-ray"/>
    <property type="resolution" value="3.00 A"/>
    <property type="chains" value="D=1-179"/>
</dbReference>
<dbReference type="PDB" id="4H44">
    <property type="method" value="X-ray"/>
    <property type="resolution" value="2.70 A"/>
    <property type="chains" value="D=1-179"/>
</dbReference>
<dbReference type="PDB" id="4OGQ">
    <property type="method" value="X-ray"/>
    <property type="resolution" value="2.50 A"/>
    <property type="chains" value="D=1-179"/>
</dbReference>
<dbReference type="PDBsum" id="2ZT9"/>
<dbReference type="PDBsum" id="4H44"/>
<dbReference type="PDBsum" id="4OGQ"/>
<dbReference type="SMR" id="Q93SX0"/>
<dbReference type="DIP" id="DIP-61003N"/>
<dbReference type="IntAct" id="Q93SX0">
    <property type="interactions" value="1"/>
</dbReference>
<dbReference type="STRING" id="103690.gene:10494483"/>
<dbReference type="TCDB" id="3.D.3.5.6">
    <property type="family name" value="the proton-translocating quinol:cytochrome c reductase (qcr) superfamily"/>
</dbReference>
<dbReference type="KEGG" id="ana:all2453"/>
<dbReference type="eggNOG" id="COG0723">
    <property type="taxonomic scope" value="Bacteria"/>
</dbReference>
<dbReference type="OrthoDB" id="9767869at2"/>
<dbReference type="BRENDA" id="7.1.1.6">
    <property type="organism ID" value="8113"/>
</dbReference>
<dbReference type="EvolutionaryTrace" id="Q93SX0"/>
<dbReference type="Proteomes" id="UP000002483">
    <property type="component" value="Chromosome"/>
</dbReference>
<dbReference type="GO" id="GO:0031676">
    <property type="term" value="C:plasma membrane-derived thylakoid membrane"/>
    <property type="evidence" value="ECO:0007669"/>
    <property type="project" value="UniProtKB-SubCell"/>
</dbReference>
<dbReference type="GO" id="GO:0051537">
    <property type="term" value="F:2 iron, 2 sulfur cluster binding"/>
    <property type="evidence" value="ECO:0007669"/>
    <property type="project" value="UniProtKB-KW"/>
</dbReference>
<dbReference type="GO" id="GO:0045158">
    <property type="term" value="F:electron transporter, transferring electrons within cytochrome b6/f complex of photosystem II activity"/>
    <property type="evidence" value="ECO:0007669"/>
    <property type="project" value="UniProtKB-UniRule"/>
</dbReference>
<dbReference type="GO" id="GO:0046872">
    <property type="term" value="F:metal ion binding"/>
    <property type="evidence" value="ECO:0007669"/>
    <property type="project" value="UniProtKB-KW"/>
</dbReference>
<dbReference type="GO" id="GO:0004497">
    <property type="term" value="F:monooxygenase activity"/>
    <property type="evidence" value="ECO:0007669"/>
    <property type="project" value="UniProtKB-ARBA"/>
</dbReference>
<dbReference type="GO" id="GO:0016705">
    <property type="term" value="F:oxidoreductase activity, acting on paired donors, with incorporation or reduction of molecular oxygen"/>
    <property type="evidence" value="ECO:0007669"/>
    <property type="project" value="UniProtKB-ARBA"/>
</dbReference>
<dbReference type="GO" id="GO:0009496">
    <property type="term" value="F:plastoquinol--plastocyanin reductase activity"/>
    <property type="evidence" value="ECO:0007669"/>
    <property type="project" value="UniProtKB-UniRule"/>
</dbReference>
<dbReference type="GO" id="GO:0015979">
    <property type="term" value="P:photosynthesis"/>
    <property type="evidence" value="ECO:0007669"/>
    <property type="project" value="UniProtKB-UniRule"/>
</dbReference>
<dbReference type="CDD" id="cd03471">
    <property type="entry name" value="Rieske_cytochrome_b6f"/>
    <property type="match status" value="1"/>
</dbReference>
<dbReference type="FunFam" id="2.102.10.10:FF:000007">
    <property type="entry name" value="Cytochrome b6-f complex iron-sulfur subunit"/>
    <property type="match status" value="1"/>
</dbReference>
<dbReference type="Gene3D" id="2.102.10.10">
    <property type="entry name" value="Rieske [2Fe-2S] iron-sulphur domain"/>
    <property type="match status" value="1"/>
</dbReference>
<dbReference type="Gene3D" id="1.20.5.700">
    <property type="entry name" value="Single helix bin"/>
    <property type="match status" value="1"/>
</dbReference>
<dbReference type="HAMAP" id="MF_01335">
    <property type="entry name" value="Cytb6_f_Rieske"/>
    <property type="match status" value="1"/>
</dbReference>
<dbReference type="InterPro" id="IPR023960">
    <property type="entry name" value="Cyt_b6_f_Rieske"/>
</dbReference>
<dbReference type="InterPro" id="IPR017941">
    <property type="entry name" value="Rieske_2Fe-2S"/>
</dbReference>
<dbReference type="InterPro" id="IPR036922">
    <property type="entry name" value="Rieske_2Fe-2S_sf"/>
</dbReference>
<dbReference type="InterPro" id="IPR014349">
    <property type="entry name" value="Rieske_Fe-S_prot"/>
</dbReference>
<dbReference type="InterPro" id="IPR005805">
    <property type="entry name" value="Rieske_Fe-S_prot_C"/>
</dbReference>
<dbReference type="NCBIfam" id="NF045928">
    <property type="entry name" value="Cytb6fFeSPetC"/>
    <property type="match status" value="1"/>
</dbReference>
<dbReference type="NCBIfam" id="NF010001">
    <property type="entry name" value="PRK13474.1"/>
    <property type="match status" value="1"/>
</dbReference>
<dbReference type="PANTHER" id="PTHR10134">
    <property type="entry name" value="CYTOCHROME B-C1 COMPLEX SUBUNIT RIESKE, MITOCHONDRIAL"/>
    <property type="match status" value="1"/>
</dbReference>
<dbReference type="Pfam" id="PF00355">
    <property type="entry name" value="Rieske"/>
    <property type="match status" value="1"/>
</dbReference>
<dbReference type="Pfam" id="PF25471">
    <property type="entry name" value="TM_PetC"/>
    <property type="match status" value="1"/>
</dbReference>
<dbReference type="PRINTS" id="PR00162">
    <property type="entry name" value="RIESKE"/>
</dbReference>
<dbReference type="SUPFAM" id="SSF50022">
    <property type="entry name" value="ISP domain"/>
    <property type="match status" value="1"/>
</dbReference>
<dbReference type="PROSITE" id="PS51296">
    <property type="entry name" value="RIESKE"/>
    <property type="match status" value="1"/>
</dbReference>
<proteinExistence type="evidence at protein level"/>
<organism>
    <name type="scientific">Nostoc sp. (strain PCC 7120 / SAG 25.82 / UTEX 2576)</name>
    <dbReference type="NCBI Taxonomy" id="103690"/>
    <lineage>
        <taxon>Bacteria</taxon>
        <taxon>Bacillati</taxon>
        <taxon>Cyanobacteriota</taxon>
        <taxon>Cyanophyceae</taxon>
        <taxon>Nostocales</taxon>
        <taxon>Nostocaceae</taxon>
        <taxon>Nostoc</taxon>
    </lineage>
</organism>
<evidence type="ECO:0000255" key="1">
    <source>
        <dbReference type="HAMAP-Rule" id="MF_01335"/>
    </source>
</evidence>
<evidence type="ECO:0007829" key="2">
    <source>
        <dbReference type="PDB" id="4H44"/>
    </source>
</evidence>
<evidence type="ECO:0007829" key="3">
    <source>
        <dbReference type="PDB" id="4OGQ"/>
    </source>
</evidence>
<gene>
    <name evidence="1" type="primary">petC1</name>
    <name type="ordered locus">all2453</name>
</gene>
<feature type="chain" id="PRO_0000127767" description="Cytochrome b6-f complex iron-sulfur subunit 1">
    <location>
        <begin position="1"/>
        <end position="179"/>
    </location>
</feature>
<feature type="transmembrane region" description="Helical" evidence="1">
    <location>
        <begin position="21"/>
        <end position="43"/>
    </location>
</feature>
<feature type="domain" description="Rieske" evidence="1">
    <location>
        <begin position="61"/>
        <end position="162"/>
    </location>
</feature>
<feature type="binding site" evidence="1">
    <location>
        <position position="108"/>
    </location>
    <ligand>
        <name>[2Fe-2S] cluster</name>
        <dbReference type="ChEBI" id="CHEBI:190135"/>
    </ligand>
</feature>
<feature type="binding site" evidence="1">
    <location>
        <position position="110"/>
    </location>
    <ligand>
        <name>[2Fe-2S] cluster</name>
        <dbReference type="ChEBI" id="CHEBI:190135"/>
    </ligand>
</feature>
<feature type="binding site" evidence="1">
    <location>
        <position position="126"/>
    </location>
    <ligand>
        <name>[2Fe-2S] cluster</name>
        <dbReference type="ChEBI" id="CHEBI:190135"/>
    </ligand>
</feature>
<feature type="binding site" evidence="1">
    <location>
        <position position="129"/>
    </location>
    <ligand>
        <name>[2Fe-2S] cluster</name>
        <dbReference type="ChEBI" id="CHEBI:190135"/>
    </ligand>
</feature>
<feature type="disulfide bond" evidence="1">
    <location>
        <begin position="113"/>
        <end position="128"/>
    </location>
</feature>
<feature type="helix" evidence="3">
    <location>
        <begin position="13"/>
        <end position="42"/>
    </location>
</feature>
<feature type="strand" evidence="3">
    <location>
        <begin position="50"/>
        <end position="52"/>
    </location>
</feature>
<feature type="helix" evidence="3">
    <location>
        <begin position="66"/>
        <end position="70"/>
    </location>
</feature>
<feature type="strand" evidence="3">
    <location>
        <begin position="79"/>
        <end position="82"/>
    </location>
</feature>
<feature type="helix" evidence="2">
    <location>
        <begin position="84"/>
        <end position="86"/>
    </location>
</feature>
<feature type="strand" evidence="3">
    <location>
        <begin position="88"/>
        <end position="91"/>
    </location>
</feature>
<feature type="strand" evidence="3">
    <location>
        <begin position="101"/>
        <end position="105"/>
    </location>
</feature>
<feature type="strand" evidence="3">
    <location>
        <begin position="109"/>
        <end position="111"/>
    </location>
</feature>
<feature type="turn" evidence="3">
    <location>
        <begin position="119"/>
        <end position="122"/>
    </location>
</feature>
<feature type="strand" evidence="3">
    <location>
        <begin position="123"/>
        <end position="125"/>
    </location>
</feature>
<feature type="turn" evidence="3">
    <location>
        <begin position="127"/>
        <end position="129"/>
    </location>
</feature>
<feature type="strand" evidence="2">
    <location>
        <begin position="135"/>
        <end position="137"/>
    </location>
</feature>
<feature type="strand" evidence="3">
    <location>
        <begin position="139"/>
        <end position="143"/>
    </location>
</feature>
<feature type="strand" evidence="3">
    <location>
        <begin position="150"/>
        <end position="156"/>
    </location>
</feature>
<feature type="strand" evidence="3">
    <location>
        <begin position="159"/>
        <end position="164"/>
    </location>
</feature>
<feature type="turn" evidence="3">
    <location>
        <begin position="170"/>
        <end position="172"/>
    </location>
</feature>
<accession>Q93SX0</accession>
<protein>
    <recommendedName>
        <fullName evidence="1">Cytochrome b6-f complex iron-sulfur subunit 1</fullName>
        <ecNumber evidence="1">7.1.1.6</ecNumber>
    </recommendedName>
    <alternativeName>
        <fullName evidence="1">Plastohydroquinone:plastocyanin oxidoreductase iron-sulfur protein 1</fullName>
        <shortName evidence="1">ISP 1</shortName>
        <shortName evidence="1">RISP 1</shortName>
    </alternativeName>
    <alternativeName>
        <fullName evidence="1">Rieske iron-sulfur protein 1</fullName>
    </alternativeName>
</protein>
<reference key="1">
    <citation type="submission" date="2001-05" db="EMBL/GenBank/DDBJ databases">
        <title>b6f complex of Anabaena sp; possible function of alternative Rieske-FeS proteins.</title>
        <authorList>
            <person name="Arnold M."/>
        </authorList>
    </citation>
    <scope>NUCLEOTIDE SEQUENCE [GENOMIC DNA]</scope>
</reference>
<reference key="2">
    <citation type="journal article" date="2001" name="DNA Res.">
        <title>Complete genomic sequence of the filamentous nitrogen-fixing cyanobacterium Anabaena sp. strain PCC 7120.</title>
        <authorList>
            <person name="Kaneko T."/>
            <person name="Nakamura Y."/>
            <person name="Wolk C.P."/>
            <person name="Kuritz T."/>
            <person name="Sasamoto S."/>
            <person name="Watanabe A."/>
            <person name="Iriguchi M."/>
            <person name="Ishikawa A."/>
            <person name="Kawashima K."/>
            <person name="Kimura T."/>
            <person name="Kishida Y."/>
            <person name="Kohara M."/>
            <person name="Matsumoto M."/>
            <person name="Matsuno A."/>
            <person name="Muraki A."/>
            <person name="Nakazaki N."/>
            <person name="Shimpo S."/>
            <person name="Sugimoto M."/>
            <person name="Takazawa M."/>
            <person name="Yamada M."/>
            <person name="Yasuda M."/>
            <person name="Tabata S."/>
        </authorList>
    </citation>
    <scope>NUCLEOTIDE SEQUENCE [LARGE SCALE GENOMIC DNA]</scope>
    <source>
        <strain>PCC 7120 / SAG 25.82 / UTEX 2576</strain>
    </source>
</reference>
<comment type="function">
    <text evidence="1">Component of the cytochrome b6-f complex, which mediates electron transfer between photosystem II (PSII) and photosystem I (PSI), cyclic electron flow around PSI, and state transitions.</text>
</comment>
<comment type="catalytic activity">
    <reaction evidence="1">
        <text>2 oxidized [plastocyanin] + a plastoquinol + 2 H(+)(in) = 2 reduced [plastocyanin] + a plastoquinone + 4 H(+)(out)</text>
        <dbReference type="Rhea" id="RHEA:22148"/>
        <dbReference type="Rhea" id="RHEA-COMP:9561"/>
        <dbReference type="Rhea" id="RHEA-COMP:9562"/>
        <dbReference type="Rhea" id="RHEA-COMP:10039"/>
        <dbReference type="Rhea" id="RHEA-COMP:10040"/>
        <dbReference type="ChEBI" id="CHEBI:15378"/>
        <dbReference type="ChEBI" id="CHEBI:17757"/>
        <dbReference type="ChEBI" id="CHEBI:29036"/>
        <dbReference type="ChEBI" id="CHEBI:49552"/>
        <dbReference type="ChEBI" id="CHEBI:62192"/>
        <dbReference type="EC" id="7.1.1.6"/>
    </reaction>
</comment>
<comment type="cofactor">
    <cofactor evidence="1">
        <name>[2Fe-2S] cluster</name>
        <dbReference type="ChEBI" id="CHEBI:190135"/>
    </cofactor>
    <text evidence="1">Binds 1 [2Fe-2S] cluster per subunit.</text>
</comment>
<comment type="subunit">
    <text evidence="1">The 4 large subunits of the cytochrome b6-f complex are cytochrome b6, subunit IV (17 kDa polypeptide, PetD), cytochrome f and the Rieske protein, while the 4 small subunits are PetG, PetL, PetM and PetN. The complex functions as a dimer.</text>
</comment>
<comment type="subcellular location">
    <subcellularLocation>
        <location evidence="1">Cellular thylakoid membrane</location>
        <topology evidence="1">Single-pass membrane protein</topology>
    </subcellularLocation>
    <text evidence="1">The transmembrane helix obliquely spans the membrane in one monomer, and its extrinsic C-terminal domain is part of the other monomer.</text>
</comment>
<comment type="miscellaneous">
    <text>The Rieske iron-sulfur protein is a high potential 2Fe-2S protein.</text>
</comment>
<comment type="similarity">
    <text evidence="1">Belongs to the Rieske iron-sulfur protein family.</text>
</comment>